<protein>
    <recommendedName>
        <fullName evidence="1">UPF0122 protein lin1916</fullName>
    </recommendedName>
</protein>
<comment type="function">
    <text evidence="1">Might take part in the signal recognition particle (SRP) pathway. This is inferred from the conservation of its genetic proximity to ftsY/ffh. May be a regulatory protein.</text>
</comment>
<comment type="similarity">
    <text evidence="1">Belongs to the UPF0122 family.</text>
</comment>
<sequence length="110" mass="13464">MFEKTNRMNLLFDFYQELLTTKQKSYVSFYYLDDYSLGEIAEEFEVSRQAIYDNIKRTEESLEKYEEKLGMLRKYQQREKLFDQLEAQLTKKNFLDEQVKDTLEQLKNID</sequence>
<proteinExistence type="inferred from homology"/>
<gene>
    <name type="ordered locus">lin1916</name>
</gene>
<organism>
    <name type="scientific">Listeria innocua serovar 6a (strain ATCC BAA-680 / CLIP 11262)</name>
    <dbReference type="NCBI Taxonomy" id="272626"/>
    <lineage>
        <taxon>Bacteria</taxon>
        <taxon>Bacillati</taxon>
        <taxon>Bacillota</taxon>
        <taxon>Bacilli</taxon>
        <taxon>Bacillales</taxon>
        <taxon>Listeriaceae</taxon>
        <taxon>Listeria</taxon>
    </lineage>
</organism>
<dbReference type="EMBL" id="AL596170">
    <property type="protein sequence ID" value="CAC97146.1"/>
    <property type="molecule type" value="Genomic_DNA"/>
</dbReference>
<dbReference type="PIR" id="AB1672">
    <property type="entry name" value="AB1672"/>
</dbReference>
<dbReference type="RefSeq" id="WP_003762903.1">
    <property type="nucleotide sequence ID" value="NC_003212.1"/>
</dbReference>
<dbReference type="SMR" id="Q92AK6"/>
<dbReference type="STRING" id="272626.gene:17566274"/>
<dbReference type="GeneID" id="93235254"/>
<dbReference type="KEGG" id="lin:lin1916"/>
<dbReference type="eggNOG" id="COG2739">
    <property type="taxonomic scope" value="Bacteria"/>
</dbReference>
<dbReference type="HOGENOM" id="CLU_129218_1_0_9"/>
<dbReference type="OrthoDB" id="6392at2"/>
<dbReference type="Proteomes" id="UP000002513">
    <property type="component" value="Chromosome"/>
</dbReference>
<dbReference type="Gene3D" id="1.10.10.10">
    <property type="entry name" value="Winged helix-like DNA-binding domain superfamily/Winged helix DNA-binding domain"/>
    <property type="match status" value="1"/>
</dbReference>
<dbReference type="HAMAP" id="MF_00245">
    <property type="entry name" value="UPF0122"/>
    <property type="match status" value="1"/>
</dbReference>
<dbReference type="InterPro" id="IPR013324">
    <property type="entry name" value="RNA_pol_sigma_r3/r4-like"/>
</dbReference>
<dbReference type="InterPro" id="IPR007394">
    <property type="entry name" value="UPF0122"/>
</dbReference>
<dbReference type="InterPro" id="IPR054831">
    <property type="entry name" value="UPF0122_fam_protein"/>
</dbReference>
<dbReference type="InterPro" id="IPR036388">
    <property type="entry name" value="WH-like_DNA-bd_sf"/>
</dbReference>
<dbReference type="NCBIfam" id="NF001068">
    <property type="entry name" value="PRK00118.1-4"/>
    <property type="match status" value="1"/>
</dbReference>
<dbReference type="NCBIfam" id="NF001069">
    <property type="entry name" value="PRK00118.1-5"/>
    <property type="match status" value="1"/>
</dbReference>
<dbReference type="NCBIfam" id="NF001070">
    <property type="entry name" value="PRK00118.1-6"/>
    <property type="match status" value="1"/>
</dbReference>
<dbReference type="NCBIfam" id="NF045758">
    <property type="entry name" value="YlxM"/>
    <property type="match status" value="1"/>
</dbReference>
<dbReference type="PANTHER" id="PTHR40083">
    <property type="entry name" value="UPF0122 PROTEIN CBO2450/CLC_2298"/>
    <property type="match status" value="1"/>
</dbReference>
<dbReference type="PANTHER" id="PTHR40083:SF1">
    <property type="entry name" value="UPF0122 PROTEIN YLXM"/>
    <property type="match status" value="1"/>
</dbReference>
<dbReference type="Pfam" id="PF04297">
    <property type="entry name" value="UPF0122"/>
    <property type="match status" value="1"/>
</dbReference>
<dbReference type="SUPFAM" id="SSF88659">
    <property type="entry name" value="Sigma3 and sigma4 domains of RNA polymerase sigma factors"/>
    <property type="match status" value="1"/>
</dbReference>
<reference key="1">
    <citation type="journal article" date="2001" name="Science">
        <title>Comparative genomics of Listeria species.</title>
        <authorList>
            <person name="Glaser P."/>
            <person name="Frangeul L."/>
            <person name="Buchrieser C."/>
            <person name="Rusniok C."/>
            <person name="Amend A."/>
            <person name="Baquero F."/>
            <person name="Berche P."/>
            <person name="Bloecker H."/>
            <person name="Brandt P."/>
            <person name="Chakraborty T."/>
            <person name="Charbit A."/>
            <person name="Chetouani F."/>
            <person name="Couve E."/>
            <person name="de Daruvar A."/>
            <person name="Dehoux P."/>
            <person name="Domann E."/>
            <person name="Dominguez-Bernal G."/>
            <person name="Duchaud E."/>
            <person name="Durant L."/>
            <person name="Dussurget O."/>
            <person name="Entian K.-D."/>
            <person name="Fsihi H."/>
            <person name="Garcia-del Portillo F."/>
            <person name="Garrido P."/>
            <person name="Gautier L."/>
            <person name="Goebel W."/>
            <person name="Gomez-Lopez N."/>
            <person name="Hain T."/>
            <person name="Hauf J."/>
            <person name="Jackson D."/>
            <person name="Jones L.-M."/>
            <person name="Kaerst U."/>
            <person name="Kreft J."/>
            <person name="Kuhn M."/>
            <person name="Kunst F."/>
            <person name="Kurapkat G."/>
            <person name="Madueno E."/>
            <person name="Maitournam A."/>
            <person name="Mata Vicente J."/>
            <person name="Ng E."/>
            <person name="Nedjari H."/>
            <person name="Nordsiek G."/>
            <person name="Novella S."/>
            <person name="de Pablos B."/>
            <person name="Perez-Diaz J.-C."/>
            <person name="Purcell R."/>
            <person name="Remmel B."/>
            <person name="Rose M."/>
            <person name="Schlueter T."/>
            <person name="Simoes N."/>
            <person name="Tierrez A."/>
            <person name="Vazquez-Boland J.-A."/>
            <person name="Voss H."/>
            <person name="Wehland J."/>
            <person name="Cossart P."/>
        </authorList>
    </citation>
    <scope>NUCLEOTIDE SEQUENCE [LARGE SCALE GENOMIC DNA]</scope>
    <source>
        <strain>ATCC BAA-680 / CLIP 11262</strain>
    </source>
</reference>
<accession>Q92AK6</accession>
<feature type="chain" id="PRO_0000211869" description="UPF0122 protein lin1916">
    <location>
        <begin position="1"/>
        <end position="110"/>
    </location>
</feature>
<name>Y1916_LISIN</name>
<evidence type="ECO:0000255" key="1">
    <source>
        <dbReference type="HAMAP-Rule" id="MF_00245"/>
    </source>
</evidence>